<protein>
    <recommendedName>
        <fullName evidence="1">Ribosome-recycling factor</fullName>
        <shortName evidence="1">RRF</shortName>
    </recommendedName>
    <alternativeName>
        <fullName evidence="1">Ribosome-releasing factor</fullName>
    </alternativeName>
</protein>
<accession>P61302</accession>
<organism>
    <name type="scientific">Bdellovibrio bacteriovorus (strain ATCC 15356 / DSM 50701 / NCIMB 9529 / HD100)</name>
    <dbReference type="NCBI Taxonomy" id="264462"/>
    <lineage>
        <taxon>Bacteria</taxon>
        <taxon>Pseudomonadati</taxon>
        <taxon>Bdellovibrionota</taxon>
        <taxon>Bdellovibrionia</taxon>
        <taxon>Bdellovibrionales</taxon>
        <taxon>Pseudobdellovibrionaceae</taxon>
        <taxon>Bdellovibrio</taxon>
    </lineage>
</organism>
<comment type="function">
    <text evidence="1">Responsible for the release of ribosomes from messenger RNA at the termination of protein biosynthesis. May increase the efficiency of translation by recycling ribosomes from one round of translation to another.</text>
</comment>
<comment type="subcellular location">
    <subcellularLocation>
        <location evidence="1">Cytoplasm</location>
    </subcellularLocation>
</comment>
<comment type="similarity">
    <text evidence="1">Belongs to the RRF family.</text>
</comment>
<name>RRF_BDEBA</name>
<keyword id="KW-0963">Cytoplasm</keyword>
<keyword id="KW-0648">Protein biosynthesis</keyword>
<keyword id="KW-1185">Reference proteome</keyword>
<reference key="1">
    <citation type="journal article" date="2004" name="Science">
        <title>A predator unmasked: life cycle of Bdellovibrio bacteriovorus from a genomic perspective.</title>
        <authorList>
            <person name="Rendulic S."/>
            <person name="Jagtap P."/>
            <person name="Rosinus A."/>
            <person name="Eppinger M."/>
            <person name="Baar C."/>
            <person name="Lanz C."/>
            <person name="Keller H."/>
            <person name="Lambert C."/>
            <person name="Evans K.J."/>
            <person name="Goesmann A."/>
            <person name="Meyer F."/>
            <person name="Sockett R.E."/>
            <person name="Schuster S.C."/>
        </authorList>
    </citation>
    <scope>NUCLEOTIDE SEQUENCE [LARGE SCALE GENOMIC DNA]</scope>
    <source>
        <strain>ATCC 15356 / DSM 50701 / NCIMB 9529 / HD100</strain>
    </source>
</reference>
<gene>
    <name evidence="1" type="primary">frr</name>
    <name type="synonym">rrf</name>
    <name type="ordered locus">Bd3784</name>
</gene>
<evidence type="ECO:0000255" key="1">
    <source>
        <dbReference type="HAMAP-Rule" id="MF_00040"/>
    </source>
</evidence>
<evidence type="ECO:0000256" key="2">
    <source>
        <dbReference type="SAM" id="MobiDB-lite"/>
    </source>
</evidence>
<feature type="chain" id="PRO_0000167417" description="Ribosome-recycling factor">
    <location>
        <begin position="1"/>
        <end position="186"/>
    </location>
</feature>
<feature type="region of interest" description="Disordered" evidence="2">
    <location>
        <begin position="135"/>
        <end position="156"/>
    </location>
</feature>
<proteinExistence type="inferred from homology"/>
<sequence length="186" mass="20732">MAIADVKKNAQAKMEKTLNSLSEELKKVRTGRAQVSMLDGIRVNYYGTPSPLSQVASISTPDAKSFLIAPWEVAILKDIEQAIIKSELGMAPMNDGKVIRLKVPDLTEERRKDLAKQVKKIAEEARVAVRMARRDANDEVKKLQKDKAVSEDEGKKAEADIQKVTDDFIKKVDQVAEEKEKAILTI</sequence>
<dbReference type="EMBL" id="BX842656">
    <property type="protein sequence ID" value="CAE81144.1"/>
    <property type="molecule type" value="Genomic_DNA"/>
</dbReference>
<dbReference type="RefSeq" id="WP_011166087.1">
    <property type="nucleotide sequence ID" value="NC_005363.1"/>
</dbReference>
<dbReference type="SMR" id="P61302"/>
<dbReference type="STRING" id="264462.Bd3784"/>
<dbReference type="GeneID" id="93014558"/>
<dbReference type="KEGG" id="bba:Bd3784"/>
<dbReference type="eggNOG" id="COG0233">
    <property type="taxonomic scope" value="Bacteria"/>
</dbReference>
<dbReference type="HOGENOM" id="CLU_073981_2_0_7"/>
<dbReference type="Proteomes" id="UP000008080">
    <property type="component" value="Chromosome"/>
</dbReference>
<dbReference type="GO" id="GO:0005737">
    <property type="term" value="C:cytoplasm"/>
    <property type="evidence" value="ECO:0007669"/>
    <property type="project" value="UniProtKB-SubCell"/>
</dbReference>
<dbReference type="GO" id="GO:0043023">
    <property type="term" value="F:ribosomal large subunit binding"/>
    <property type="evidence" value="ECO:0007669"/>
    <property type="project" value="TreeGrafter"/>
</dbReference>
<dbReference type="GO" id="GO:0006415">
    <property type="term" value="P:translational termination"/>
    <property type="evidence" value="ECO:0007669"/>
    <property type="project" value="UniProtKB-UniRule"/>
</dbReference>
<dbReference type="CDD" id="cd00520">
    <property type="entry name" value="RRF"/>
    <property type="match status" value="1"/>
</dbReference>
<dbReference type="FunFam" id="1.10.132.20:FF:000001">
    <property type="entry name" value="Ribosome-recycling factor"/>
    <property type="match status" value="1"/>
</dbReference>
<dbReference type="FunFam" id="3.30.1360.40:FF:000001">
    <property type="entry name" value="Ribosome-recycling factor"/>
    <property type="match status" value="1"/>
</dbReference>
<dbReference type="Gene3D" id="3.30.1360.40">
    <property type="match status" value="1"/>
</dbReference>
<dbReference type="Gene3D" id="1.10.132.20">
    <property type="entry name" value="Ribosome-recycling factor"/>
    <property type="match status" value="1"/>
</dbReference>
<dbReference type="HAMAP" id="MF_00040">
    <property type="entry name" value="RRF"/>
    <property type="match status" value="1"/>
</dbReference>
<dbReference type="InterPro" id="IPR002661">
    <property type="entry name" value="Ribosome_recyc_fac"/>
</dbReference>
<dbReference type="InterPro" id="IPR023584">
    <property type="entry name" value="Ribosome_recyc_fac_dom"/>
</dbReference>
<dbReference type="InterPro" id="IPR036191">
    <property type="entry name" value="RRF_sf"/>
</dbReference>
<dbReference type="NCBIfam" id="TIGR00496">
    <property type="entry name" value="frr"/>
    <property type="match status" value="1"/>
</dbReference>
<dbReference type="PANTHER" id="PTHR20982:SF3">
    <property type="entry name" value="MITOCHONDRIAL RIBOSOME RECYCLING FACTOR PSEUDO 1"/>
    <property type="match status" value="1"/>
</dbReference>
<dbReference type="PANTHER" id="PTHR20982">
    <property type="entry name" value="RIBOSOME RECYCLING FACTOR"/>
    <property type="match status" value="1"/>
</dbReference>
<dbReference type="Pfam" id="PF01765">
    <property type="entry name" value="RRF"/>
    <property type="match status" value="1"/>
</dbReference>
<dbReference type="SUPFAM" id="SSF55194">
    <property type="entry name" value="Ribosome recycling factor, RRF"/>
    <property type="match status" value="1"/>
</dbReference>